<proteinExistence type="evidence at transcript level"/>
<feature type="signal peptide" evidence="1">
    <location>
        <begin position="1"/>
        <end position="20"/>
    </location>
</feature>
<feature type="chain" id="PRO_0000012954" description="Taste receptor type 1 member 1">
    <location>
        <begin position="21"/>
        <end position="841"/>
    </location>
</feature>
<feature type="topological domain" description="Extracellular" evidence="1">
    <location>
        <begin position="21"/>
        <end position="567"/>
    </location>
</feature>
<feature type="transmembrane region" description="Helical; Name=1" evidence="1">
    <location>
        <begin position="568"/>
        <end position="588"/>
    </location>
</feature>
<feature type="topological domain" description="Cytoplasmic" evidence="1">
    <location>
        <begin position="589"/>
        <end position="603"/>
    </location>
</feature>
<feature type="transmembrane region" description="Helical; Name=2" evidence="1">
    <location>
        <begin position="604"/>
        <end position="624"/>
    </location>
</feature>
<feature type="topological domain" description="Extracellular" evidence="1">
    <location>
        <begin position="625"/>
        <end position="639"/>
    </location>
</feature>
<feature type="transmembrane region" description="Helical; Name=3" evidence="1">
    <location>
        <begin position="640"/>
        <end position="660"/>
    </location>
</feature>
<feature type="topological domain" description="Cytoplasmic" evidence="1">
    <location>
        <begin position="661"/>
        <end position="680"/>
    </location>
</feature>
<feature type="transmembrane region" description="Helical; Name=4" evidence="1">
    <location>
        <begin position="681"/>
        <end position="701"/>
    </location>
</feature>
<feature type="topological domain" description="Extracellular" evidence="1">
    <location>
        <begin position="702"/>
        <end position="725"/>
    </location>
</feature>
<feature type="transmembrane region" description="Helical; Name=5" evidence="1">
    <location>
        <begin position="726"/>
        <end position="746"/>
    </location>
</feature>
<feature type="topological domain" description="Cytoplasmic" evidence="1">
    <location>
        <begin position="747"/>
        <end position="761"/>
    </location>
</feature>
<feature type="transmembrane region" description="Helical; Name=6" evidence="1">
    <location>
        <begin position="762"/>
        <end position="782"/>
    </location>
</feature>
<feature type="topological domain" description="Extracellular" evidence="1">
    <location>
        <begin position="783"/>
        <end position="795"/>
    </location>
</feature>
<feature type="transmembrane region" description="Helical; Name=7" evidence="1">
    <location>
        <begin position="796"/>
        <end position="816"/>
    </location>
</feature>
<feature type="topological domain" description="Cytoplasmic" evidence="1">
    <location>
        <begin position="817"/>
        <end position="841"/>
    </location>
</feature>
<feature type="glycosylation site" description="N-linked (GlcNAc...) asparagine" evidence="1">
    <location>
        <position position="87"/>
    </location>
</feature>
<feature type="glycosylation site" description="N-linked (GlcNAc...) asparagine" evidence="1">
    <location>
        <position position="88"/>
    </location>
</feature>
<feature type="glycosylation site" description="N-linked (GlcNAc...) asparagine" evidence="1">
    <location>
        <position position="95"/>
    </location>
</feature>
<feature type="glycosylation site" description="N-linked (GlcNAc...) asparagine" evidence="1">
    <location>
        <position position="291"/>
    </location>
</feature>
<feature type="glycosylation site" description="N-linked (GlcNAc...) asparagine" evidence="1">
    <location>
        <position position="479"/>
    </location>
</feature>
<feature type="glycosylation site" description="N-linked (GlcNAc...) asparagine" evidence="1">
    <location>
        <position position="529"/>
    </location>
</feature>
<feature type="splice variant" id="VSP_012418" description="In isoform 2, isoform 3 and isoform 4." evidence="5">
    <location>
        <begin position="167"/>
        <end position="420"/>
    </location>
</feature>
<feature type="splice variant" id="VSP_012420" description="In isoform 3." evidence="5">
    <original>LLEQIHKVHFLLHKDTVAFNDNRDPLSSYNIIAWDWNGPKWTFTVLGSSTWSPVQLNINETKIQWHGKDNQVPKSVCSSDCLEGHQRVVTGFHHCCFECVPCGAGTFLNKSDLYRCQPCGKEEWAPEGSQTCFPRTVVFLALREHTSWVLLAANTLLLLLLLGTAGLFAWHLDTPVVRSAGGRLCFLMLGSLAAGSGSLYGFFGEPTRPACLLRQALFALGFTIFLSCLTVRSFQLIIIFKFSTKVPTFYHAWVQNHGAGLFVMISSAAQLLICLTWLVVWTPLPAREYQRFPHLVMLECTETNSLGFILAFLYNGLLSISAFACSYLGKDLPENYNEAKCVTFSLLFNFVSWIAFFTTASVYDGKYLPAANMMAGLSSLSSGFGGYFLPKCYVILCRPDLNSTEHFQASIQDYTRRCGST</original>
    <variation>LSYAASSETLSVKRQYPSFLRTIPNDKYQVETMVLLLQKFGWTWISLVGSSDDYGQLGVQALENQATGQGICIAFKDIMPFSAQVGDERMQCLMRHLAQAGATVVVVFSSRQLARVFFESVVLTNLTGKVWVASEAWALSRHITGVPGIQRIGMVLGVAIQKRAVPGLKAFEEAYARADKKAPRPCHKGSWCSSNQLCRECQAFMAHTMPKLKAFSMSSAYNAYRAVYAVAHGLHQLLGCASGACSRGRVYPWQTSTDASLVGKKSGHLREARPASRALWCFWLCVSTPLGCCWQLTRCCCCCCLGLLACLPGT</variation>
    <location>
        <begin position="421"/>
        <end position="841"/>
    </location>
</feature>
<feature type="splice variant" id="VSP_012421" description="In isoform 4." evidence="5">
    <original>DLYRCQPCGKEEWAPEGSQTCFPRTVVFLALREHTSWVLLAAN</original>
    <variation>ATWVRTCQRTTTRTNVSPSACSSTSCPGSPSSPRPASTTAXTC</variation>
    <location>
        <begin position="532"/>
        <end position="574"/>
    </location>
</feature>
<feature type="splice variant" id="VSP_012422" description="In isoform 4." evidence="5">
    <location>
        <begin position="575"/>
        <end position="841"/>
    </location>
</feature>
<feature type="sequence variant" id="VAR_036707" description="In dbSNP:rs10864628." evidence="2 4">
    <original>K</original>
    <variation>E</variation>
    <location>
        <position position="347"/>
    </location>
</feature>
<feature type="sequence variant" id="VAR_036708" description="In dbSNP:rs34160967.">
    <original>A</original>
    <variation>T</variation>
    <location>
        <position position="372"/>
    </location>
</feature>
<feature type="sequence variant" id="VAR_036709" description="In dbSNP:rs35118458.">
    <original>R</original>
    <variation>Q</variation>
    <location>
        <position position="507"/>
    </location>
</feature>
<feature type="sequence conflict" description="In Ref. 4; AAL91358." evidence="6" ref="4">
    <original>I</original>
    <variation>L</variation>
    <location>
        <position position="167"/>
    </location>
</feature>
<feature type="sequence conflict" description="In Ref. 4; AAL91360." evidence="6" ref="4">
    <original>C</original>
    <variation>W</variation>
    <location>
        <position position="648"/>
    </location>
</feature>
<dbReference type="EMBL" id="AB065618">
    <property type="protein sequence ID" value="BAC05845.1"/>
    <property type="status" value="ALT_SEQ"/>
    <property type="molecule type" value="Genomic_DNA"/>
</dbReference>
<dbReference type="EMBL" id="AL591866">
    <property type="status" value="NOT_ANNOTATED_CDS"/>
    <property type="molecule type" value="Genomic_DNA"/>
</dbReference>
<dbReference type="EMBL" id="BC136515">
    <property type="protein sequence ID" value="AAI36516.1"/>
    <property type="molecule type" value="mRNA"/>
</dbReference>
<dbReference type="EMBL" id="BC136516">
    <property type="protein sequence ID" value="AAI36517.1"/>
    <property type="molecule type" value="mRNA"/>
</dbReference>
<dbReference type="EMBL" id="AF387617">
    <property type="protein sequence ID" value="AAL91358.1"/>
    <property type="status" value="ALT_SEQ"/>
    <property type="molecule type" value="mRNA"/>
</dbReference>
<dbReference type="EMBL" id="AF387618">
    <property type="protein sequence ID" value="AAL91359.1"/>
    <property type="status" value="ALT_INIT"/>
    <property type="molecule type" value="mRNA"/>
</dbReference>
<dbReference type="EMBL" id="AF387619">
    <property type="protein sequence ID" value="AAL91360.1"/>
    <property type="status" value="ALT_INIT"/>
    <property type="molecule type" value="mRNA"/>
</dbReference>
<dbReference type="EMBL" id="AF387620">
    <property type="protein sequence ID" value="AAL91361.1"/>
    <property type="status" value="ALT_INIT"/>
    <property type="molecule type" value="mRNA"/>
</dbReference>
<dbReference type="EMBL" id="BK000153">
    <property type="protein sequence ID" value="DAA00012.1"/>
    <property type="molecule type" value="mRNA"/>
</dbReference>
<dbReference type="CCDS" id="CCDS81.1">
    <molecule id="Q7RTX1-1"/>
</dbReference>
<dbReference type="CCDS" id="CCDS82.1">
    <molecule id="Q7RTX1-2"/>
</dbReference>
<dbReference type="RefSeq" id="NP_619642.2">
    <molecule id="Q7RTX1-1"/>
    <property type="nucleotide sequence ID" value="NM_138697.3"/>
</dbReference>
<dbReference type="RefSeq" id="NP_803884.1">
    <molecule id="Q7RTX1-2"/>
    <property type="nucleotide sequence ID" value="NM_177540.3"/>
</dbReference>
<dbReference type="SMR" id="Q7RTX1"/>
<dbReference type="BioGRID" id="123328">
    <property type="interactions" value="4"/>
</dbReference>
<dbReference type="FunCoup" id="Q7RTX1">
    <property type="interactions" value="567"/>
</dbReference>
<dbReference type="STRING" id="9606.ENSP00000331867"/>
<dbReference type="BindingDB" id="Q7RTX1"/>
<dbReference type="ChEMBL" id="CHEMBL3832641"/>
<dbReference type="TCDB" id="9.A.14.7.5">
    <property type="family name" value="the g-protein-coupled receptor (gpcr) family"/>
</dbReference>
<dbReference type="GlyCosmos" id="Q7RTX1">
    <property type="glycosylation" value="6 sites, No reported glycans"/>
</dbReference>
<dbReference type="GlyGen" id="Q7RTX1">
    <property type="glycosylation" value="7 sites"/>
</dbReference>
<dbReference type="iPTMnet" id="Q7RTX1"/>
<dbReference type="PhosphoSitePlus" id="Q7RTX1"/>
<dbReference type="BioMuta" id="TAS1R1"/>
<dbReference type="DMDM" id="57013075"/>
<dbReference type="MassIVE" id="Q7RTX1"/>
<dbReference type="PaxDb" id="9606-ENSP00000331867"/>
<dbReference type="PeptideAtlas" id="Q7RTX1"/>
<dbReference type="Antibodypedia" id="27421">
    <property type="antibodies" value="233 antibodies from 26 providers"/>
</dbReference>
<dbReference type="DNASU" id="80835"/>
<dbReference type="Ensembl" id="ENST00000333172.11">
    <molecule id="Q7RTX1-1"/>
    <property type="protein sequence ID" value="ENSP00000331867.6"/>
    <property type="gene ID" value="ENSG00000173662.21"/>
</dbReference>
<dbReference type="Ensembl" id="ENST00000351136.7">
    <molecule id="Q7RTX1-2"/>
    <property type="protein sequence ID" value="ENSP00000312558.5"/>
    <property type="gene ID" value="ENSG00000173662.21"/>
</dbReference>
<dbReference type="GeneID" id="80835"/>
<dbReference type="KEGG" id="hsa:80835"/>
<dbReference type="MANE-Select" id="ENST00000333172.11">
    <property type="protein sequence ID" value="ENSP00000331867.6"/>
    <property type="RefSeq nucleotide sequence ID" value="NM_138697.4"/>
    <property type="RefSeq protein sequence ID" value="NP_619642.2"/>
</dbReference>
<dbReference type="UCSC" id="uc001ant.4">
    <molecule id="Q7RTX1-1"/>
    <property type="organism name" value="human"/>
</dbReference>
<dbReference type="AGR" id="HGNC:14448"/>
<dbReference type="CTD" id="80835"/>
<dbReference type="DisGeNET" id="80835"/>
<dbReference type="GeneCards" id="TAS1R1"/>
<dbReference type="HGNC" id="HGNC:14448">
    <property type="gene designation" value="TAS1R1"/>
</dbReference>
<dbReference type="HPA" id="ENSG00000173662">
    <property type="expression patterns" value="Tissue enriched (testis)"/>
</dbReference>
<dbReference type="MIM" id="606225">
    <property type="type" value="gene"/>
</dbReference>
<dbReference type="neXtProt" id="NX_Q7RTX1"/>
<dbReference type="OpenTargets" id="ENSG00000173662"/>
<dbReference type="PharmGKB" id="PA37882"/>
<dbReference type="VEuPathDB" id="HostDB:ENSG00000173662"/>
<dbReference type="eggNOG" id="KOG1056">
    <property type="taxonomic scope" value="Eukaryota"/>
</dbReference>
<dbReference type="GeneTree" id="ENSGT00940000161264"/>
<dbReference type="HOGENOM" id="CLU_005389_5_1_1"/>
<dbReference type="InParanoid" id="Q7RTX1"/>
<dbReference type="OMA" id="EDWAIST"/>
<dbReference type="OrthoDB" id="5984008at2759"/>
<dbReference type="PAN-GO" id="Q7RTX1">
    <property type="GO annotations" value="3 GO annotations based on evolutionary models"/>
</dbReference>
<dbReference type="PhylomeDB" id="Q7RTX1"/>
<dbReference type="TreeFam" id="TF331269"/>
<dbReference type="PathwayCommons" id="Q7RTX1"/>
<dbReference type="Reactome" id="R-HSA-418594">
    <property type="pathway name" value="G alpha (i) signalling events"/>
</dbReference>
<dbReference type="Reactome" id="R-HSA-420499">
    <property type="pathway name" value="Class C/3 (Metabotropic glutamate/pheromone receptors)"/>
</dbReference>
<dbReference type="Reactome" id="R-HSA-9717207">
    <property type="pathway name" value="Sensory perception of sweet, bitter, and umami (glutamate) taste"/>
</dbReference>
<dbReference type="BioGRID-ORCS" id="80835">
    <property type="hits" value="13 hits in 1142 CRISPR screens"/>
</dbReference>
<dbReference type="ChiTaRS" id="TAS1R1">
    <property type="organism name" value="human"/>
</dbReference>
<dbReference type="GeneWiki" id="TAS1R1"/>
<dbReference type="GenomeRNAi" id="80835"/>
<dbReference type="Pharos" id="Q7RTX1">
    <property type="development level" value="Tbio"/>
</dbReference>
<dbReference type="PRO" id="PR:Q7RTX1"/>
<dbReference type="Proteomes" id="UP000005640">
    <property type="component" value="Chromosome 1"/>
</dbReference>
<dbReference type="RNAct" id="Q7RTX1">
    <property type="molecule type" value="protein"/>
</dbReference>
<dbReference type="Bgee" id="ENSG00000173662">
    <property type="expression patterns" value="Expressed in primordial germ cell in gonad and 83 other cell types or tissues"/>
</dbReference>
<dbReference type="ExpressionAtlas" id="Q7RTX1">
    <property type="expression patterns" value="baseline and differential"/>
</dbReference>
<dbReference type="GO" id="GO:0016020">
    <property type="term" value="C:membrane"/>
    <property type="evidence" value="ECO:0000305"/>
    <property type="project" value="UniProtKB"/>
</dbReference>
<dbReference type="GO" id="GO:0005886">
    <property type="term" value="C:plasma membrane"/>
    <property type="evidence" value="ECO:0000318"/>
    <property type="project" value="GO_Central"/>
</dbReference>
<dbReference type="GO" id="GO:0004930">
    <property type="term" value="F:G protein-coupled receptor activity"/>
    <property type="evidence" value="ECO:0000318"/>
    <property type="project" value="GO_Central"/>
</dbReference>
<dbReference type="GO" id="GO:0008527">
    <property type="term" value="F:taste receptor activity"/>
    <property type="evidence" value="ECO:0000353"/>
    <property type="project" value="UniProtKB"/>
</dbReference>
<dbReference type="GO" id="GO:0050917">
    <property type="term" value="P:sensory perception of umami taste"/>
    <property type="evidence" value="ECO:0000314"/>
    <property type="project" value="UniProtKB"/>
</dbReference>
<dbReference type="CDD" id="cd06363">
    <property type="entry name" value="PBP1_taste_receptor"/>
    <property type="match status" value="1"/>
</dbReference>
<dbReference type="FunFam" id="3.40.50.2300:FF:000016">
    <property type="entry name" value="Taste 1 receptor member 2"/>
    <property type="match status" value="1"/>
</dbReference>
<dbReference type="FunFam" id="2.10.50.30:FF:000004">
    <property type="entry name" value="Taste receptor type 1 member 3-like protein"/>
    <property type="match status" value="1"/>
</dbReference>
<dbReference type="Gene3D" id="3.40.50.2300">
    <property type="match status" value="2"/>
</dbReference>
<dbReference type="Gene3D" id="2.10.50.30">
    <property type="entry name" value="GPCR, family 3, nine cysteines domain"/>
    <property type="match status" value="1"/>
</dbReference>
<dbReference type="InterPro" id="IPR001828">
    <property type="entry name" value="ANF_lig-bd_rcpt"/>
</dbReference>
<dbReference type="InterPro" id="IPR000337">
    <property type="entry name" value="GPCR_3"/>
</dbReference>
<dbReference type="InterPro" id="IPR011500">
    <property type="entry name" value="GPCR_3_9-Cys_dom"/>
</dbReference>
<dbReference type="InterPro" id="IPR038550">
    <property type="entry name" value="GPCR_3_9-Cys_sf"/>
</dbReference>
<dbReference type="InterPro" id="IPR017978">
    <property type="entry name" value="GPCR_3_C"/>
</dbReference>
<dbReference type="InterPro" id="IPR000068">
    <property type="entry name" value="GPCR_3_Ca_sens_rcpt-rel"/>
</dbReference>
<dbReference type="InterPro" id="IPR017979">
    <property type="entry name" value="GPCR_3_CS"/>
</dbReference>
<dbReference type="InterPro" id="IPR028082">
    <property type="entry name" value="Peripla_BP_I"/>
</dbReference>
<dbReference type="PANTHER" id="PTHR24061">
    <property type="entry name" value="CALCIUM-SENSING RECEPTOR-RELATED"/>
    <property type="match status" value="1"/>
</dbReference>
<dbReference type="PANTHER" id="PTHR24061:SF3">
    <property type="entry name" value="TASTE RECEPTOR TYPE 1 MEMBER 1"/>
    <property type="match status" value="1"/>
</dbReference>
<dbReference type="Pfam" id="PF00003">
    <property type="entry name" value="7tm_3"/>
    <property type="match status" value="1"/>
</dbReference>
<dbReference type="Pfam" id="PF01094">
    <property type="entry name" value="ANF_receptor"/>
    <property type="match status" value="1"/>
</dbReference>
<dbReference type="Pfam" id="PF07562">
    <property type="entry name" value="NCD3G"/>
    <property type="match status" value="1"/>
</dbReference>
<dbReference type="PRINTS" id="PR00592">
    <property type="entry name" value="CASENSINGR"/>
</dbReference>
<dbReference type="PRINTS" id="PR00248">
    <property type="entry name" value="GPCRMGR"/>
</dbReference>
<dbReference type="SUPFAM" id="SSF53822">
    <property type="entry name" value="Periplasmic binding protein-like I"/>
    <property type="match status" value="1"/>
</dbReference>
<dbReference type="PROSITE" id="PS00980">
    <property type="entry name" value="G_PROTEIN_RECEP_F3_2"/>
    <property type="match status" value="1"/>
</dbReference>
<dbReference type="PROSITE" id="PS00981">
    <property type="entry name" value="G_PROTEIN_RECEP_F3_3"/>
    <property type="match status" value="1"/>
</dbReference>
<dbReference type="PROSITE" id="PS50259">
    <property type="entry name" value="G_PROTEIN_RECEP_F3_4"/>
    <property type="match status" value="1"/>
</dbReference>
<reference key="1">
    <citation type="submission" date="2001-07" db="EMBL/GenBank/DDBJ databases">
        <title>Genome-wide discovery and analysis of human seven transmembrane helix receptor genes.</title>
        <authorList>
            <person name="Suwa M."/>
            <person name="Sato T."/>
            <person name="Okouchi I."/>
            <person name="Arita M."/>
            <person name="Futami K."/>
            <person name="Matsumoto S."/>
            <person name="Tsutsumi S."/>
            <person name="Aburatani H."/>
            <person name="Asai K."/>
            <person name="Akiyama Y."/>
        </authorList>
    </citation>
    <scope>NUCLEOTIDE SEQUENCE [GENOMIC DNA]</scope>
</reference>
<reference key="2">
    <citation type="journal article" date="2006" name="Nature">
        <title>The DNA sequence and biological annotation of human chromosome 1.</title>
        <authorList>
            <person name="Gregory S.G."/>
            <person name="Barlow K.F."/>
            <person name="McLay K.E."/>
            <person name="Kaul R."/>
            <person name="Swarbreck D."/>
            <person name="Dunham A."/>
            <person name="Scott C.E."/>
            <person name="Howe K.L."/>
            <person name="Woodfine K."/>
            <person name="Spencer C.C.A."/>
            <person name="Jones M.C."/>
            <person name="Gillson C."/>
            <person name="Searle S."/>
            <person name="Zhou Y."/>
            <person name="Kokocinski F."/>
            <person name="McDonald L."/>
            <person name="Evans R."/>
            <person name="Phillips K."/>
            <person name="Atkinson A."/>
            <person name="Cooper R."/>
            <person name="Jones C."/>
            <person name="Hall R.E."/>
            <person name="Andrews T.D."/>
            <person name="Lloyd C."/>
            <person name="Ainscough R."/>
            <person name="Almeida J.P."/>
            <person name="Ambrose K.D."/>
            <person name="Anderson F."/>
            <person name="Andrew R.W."/>
            <person name="Ashwell R.I.S."/>
            <person name="Aubin K."/>
            <person name="Babbage A.K."/>
            <person name="Bagguley C.L."/>
            <person name="Bailey J."/>
            <person name="Beasley H."/>
            <person name="Bethel G."/>
            <person name="Bird C.P."/>
            <person name="Bray-Allen S."/>
            <person name="Brown J.Y."/>
            <person name="Brown A.J."/>
            <person name="Buckley D."/>
            <person name="Burton J."/>
            <person name="Bye J."/>
            <person name="Carder C."/>
            <person name="Chapman J.C."/>
            <person name="Clark S.Y."/>
            <person name="Clarke G."/>
            <person name="Clee C."/>
            <person name="Cobley V."/>
            <person name="Collier R.E."/>
            <person name="Corby N."/>
            <person name="Coville G.J."/>
            <person name="Davies J."/>
            <person name="Deadman R."/>
            <person name="Dunn M."/>
            <person name="Earthrowl M."/>
            <person name="Ellington A.G."/>
            <person name="Errington H."/>
            <person name="Frankish A."/>
            <person name="Frankland J."/>
            <person name="French L."/>
            <person name="Garner P."/>
            <person name="Garnett J."/>
            <person name="Gay L."/>
            <person name="Ghori M.R.J."/>
            <person name="Gibson R."/>
            <person name="Gilby L.M."/>
            <person name="Gillett W."/>
            <person name="Glithero R.J."/>
            <person name="Grafham D.V."/>
            <person name="Griffiths C."/>
            <person name="Griffiths-Jones S."/>
            <person name="Grocock R."/>
            <person name="Hammond S."/>
            <person name="Harrison E.S.I."/>
            <person name="Hart E."/>
            <person name="Haugen E."/>
            <person name="Heath P.D."/>
            <person name="Holmes S."/>
            <person name="Holt K."/>
            <person name="Howden P.J."/>
            <person name="Hunt A.R."/>
            <person name="Hunt S.E."/>
            <person name="Hunter G."/>
            <person name="Isherwood J."/>
            <person name="James R."/>
            <person name="Johnson C."/>
            <person name="Johnson D."/>
            <person name="Joy A."/>
            <person name="Kay M."/>
            <person name="Kershaw J.K."/>
            <person name="Kibukawa M."/>
            <person name="Kimberley A.M."/>
            <person name="King A."/>
            <person name="Knights A.J."/>
            <person name="Lad H."/>
            <person name="Laird G."/>
            <person name="Lawlor S."/>
            <person name="Leongamornlert D.A."/>
            <person name="Lloyd D.M."/>
            <person name="Loveland J."/>
            <person name="Lovell J."/>
            <person name="Lush M.J."/>
            <person name="Lyne R."/>
            <person name="Martin S."/>
            <person name="Mashreghi-Mohammadi M."/>
            <person name="Matthews L."/>
            <person name="Matthews N.S.W."/>
            <person name="McLaren S."/>
            <person name="Milne S."/>
            <person name="Mistry S."/>
            <person name="Moore M.J.F."/>
            <person name="Nickerson T."/>
            <person name="O'Dell C.N."/>
            <person name="Oliver K."/>
            <person name="Palmeiri A."/>
            <person name="Palmer S.A."/>
            <person name="Parker A."/>
            <person name="Patel D."/>
            <person name="Pearce A.V."/>
            <person name="Peck A.I."/>
            <person name="Pelan S."/>
            <person name="Phelps K."/>
            <person name="Phillimore B.J."/>
            <person name="Plumb R."/>
            <person name="Rajan J."/>
            <person name="Raymond C."/>
            <person name="Rouse G."/>
            <person name="Saenphimmachak C."/>
            <person name="Sehra H.K."/>
            <person name="Sheridan E."/>
            <person name="Shownkeen R."/>
            <person name="Sims S."/>
            <person name="Skuce C.D."/>
            <person name="Smith M."/>
            <person name="Steward C."/>
            <person name="Subramanian S."/>
            <person name="Sycamore N."/>
            <person name="Tracey A."/>
            <person name="Tromans A."/>
            <person name="Van Helmond Z."/>
            <person name="Wall M."/>
            <person name="Wallis J.M."/>
            <person name="White S."/>
            <person name="Whitehead S.L."/>
            <person name="Wilkinson J.E."/>
            <person name="Willey D.L."/>
            <person name="Williams H."/>
            <person name="Wilming L."/>
            <person name="Wray P.W."/>
            <person name="Wu Z."/>
            <person name="Coulson A."/>
            <person name="Vaudin M."/>
            <person name="Sulston J.E."/>
            <person name="Durbin R.M."/>
            <person name="Hubbard T."/>
            <person name="Wooster R."/>
            <person name="Dunham I."/>
            <person name="Carter N.P."/>
            <person name="McVean G."/>
            <person name="Ross M.T."/>
            <person name="Harrow J."/>
            <person name="Olson M.V."/>
            <person name="Beck S."/>
            <person name="Rogers J."/>
            <person name="Bentley D.R."/>
        </authorList>
    </citation>
    <scope>NUCLEOTIDE SEQUENCE [LARGE SCALE GENOMIC DNA]</scope>
</reference>
<reference key="3">
    <citation type="journal article" date="2004" name="Genome Res.">
        <title>The status, quality, and expansion of the NIH full-length cDNA project: the Mammalian Gene Collection (MGC).</title>
        <authorList>
            <consortium name="The MGC Project Team"/>
        </authorList>
    </citation>
    <scope>NUCLEOTIDE SEQUENCE [LARGE SCALE MRNA] (ISOFORM 1)</scope>
    <scope>VARIANT GLU-347</scope>
</reference>
<reference key="4">
    <citation type="journal article" date="2002" name="Gene">
        <title>Identification of six novel genes by experimental validation of GeneMachine predicted genes.</title>
        <authorList>
            <person name="Makalowska I."/>
            <person name="Sood R."/>
            <person name="Faruque M.U."/>
            <person name="Hu P."/>
            <person name="Robbins C.M."/>
            <person name="Eddings E.M."/>
            <person name="Mestre J.D."/>
            <person name="Baxevanis A.D."/>
            <person name="Carpten J.D."/>
        </authorList>
    </citation>
    <scope>NUCLEOTIDE SEQUENCE [MRNA] OF 65-841 (ISOFORMS 1; 2; 3 AND 4)</scope>
    <scope>VARIANT GLU-347</scope>
</reference>
<reference key="5">
    <citation type="journal article" date="2002" name="Proc. Natl. Acad. Sci. U.S.A.">
        <title>Human receptors for sweet and umami taste.</title>
        <authorList>
            <person name="Li X."/>
            <person name="Staszewski L."/>
            <person name="Xu H."/>
            <person name="Durick K."/>
            <person name="Zoller M."/>
            <person name="Adler E."/>
        </authorList>
    </citation>
    <scope>IDENTIFICATION (ISOFORM 1)</scope>
    <scope>FUNCTION</scope>
</reference>
<keyword id="KW-0025">Alternative splicing</keyword>
<keyword id="KW-1003">Cell membrane</keyword>
<keyword id="KW-0297">G-protein coupled receptor</keyword>
<keyword id="KW-0325">Glycoprotein</keyword>
<keyword id="KW-0472">Membrane</keyword>
<keyword id="KW-0675">Receptor</keyword>
<keyword id="KW-1185">Reference proteome</keyword>
<keyword id="KW-0716">Sensory transduction</keyword>
<keyword id="KW-0732">Signal</keyword>
<keyword id="KW-0919">Taste</keyword>
<keyword id="KW-0807">Transducer</keyword>
<keyword id="KW-0812">Transmembrane</keyword>
<keyword id="KW-1133">Transmembrane helix</keyword>
<organism>
    <name type="scientific">Homo sapiens</name>
    <name type="common">Human</name>
    <dbReference type="NCBI Taxonomy" id="9606"/>
    <lineage>
        <taxon>Eukaryota</taxon>
        <taxon>Metazoa</taxon>
        <taxon>Chordata</taxon>
        <taxon>Craniata</taxon>
        <taxon>Vertebrata</taxon>
        <taxon>Euteleostomi</taxon>
        <taxon>Mammalia</taxon>
        <taxon>Eutheria</taxon>
        <taxon>Euarchontoglires</taxon>
        <taxon>Primates</taxon>
        <taxon>Haplorrhini</taxon>
        <taxon>Catarrhini</taxon>
        <taxon>Hominidae</taxon>
        <taxon>Homo</taxon>
    </lineage>
</organism>
<protein>
    <recommendedName>
        <fullName>Taste receptor type 1 member 1</fullName>
    </recommendedName>
    <alternativeName>
        <fullName>G-protein coupled receptor 70</fullName>
    </alternativeName>
</protein>
<gene>
    <name type="primary">TAS1R1</name>
    <name type="synonym">GPR70</name>
    <name type="synonym">T1R1</name>
    <name type="synonym">TR1</name>
    <name type="ORF">GM148</name>
</gene>
<evidence type="ECO:0000255" key="1"/>
<evidence type="ECO:0000269" key="2">
    <source>
    </source>
</evidence>
<evidence type="ECO:0000269" key="3">
    <source>
    </source>
</evidence>
<evidence type="ECO:0000269" key="4">
    <source>
    </source>
</evidence>
<evidence type="ECO:0000303" key="5">
    <source>
    </source>
</evidence>
<evidence type="ECO:0000305" key="6"/>
<accession>Q7RTX1</accession>
<accession>B2RMX0</accession>
<accession>Q5SY22</accession>
<accession>Q5SY24</accession>
<accession>Q8NGZ7</accession>
<accession>Q8TDJ7</accession>
<accession>Q8TDJ8</accession>
<accession>Q8TDJ9</accession>
<accession>Q8TDK0</accession>
<sequence length="841" mass="93074">MLLCTARLVGLQLLISCCWAFACHSTESSPDFTLPGDYLLAGLFPLHSGCLQVRHRPEVTLCDRSCSFNEHGYHLFQAMRLGVEEINNSTALLPNITLGYQLYDVCSDSANVYATLRVLSLPGQHHIELQGDLLHYSPTVLAVIGPDSTNRAATTAALLSPFLVPMISYAASSETLSVKRQYPSFLRTIPNDKYQVETMVLLLQKFGWTWISLVGSSDDYGQLGVQALENQATGQGICIAFKDIMPFSAQVGDERMQCLMRHLAQAGATVVVVFSSRQLARVFFESVVLTNLTGKVWVASEAWALSRHITGVPGIQRIGMVLGVAIQKRAVPGLKAFEEAYARADKKAPRPCHKGSWCSSNQLCRECQAFMAHTMPKLKAFSMSSAYNAYRAVYAVAHGLHQLLGCASGACSRGRVYPWQLLEQIHKVHFLLHKDTVAFNDNRDPLSSYNIIAWDWNGPKWTFTVLGSSTWSPVQLNINETKIQWHGKDNQVPKSVCSSDCLEGHQRVVTGFHHCCFECVPCGAGTFLNKSDLYRCQPCGKEEWAPEGSQTCFPRTVVFLALREHTSWVLLAANTLLLLLLLGTAGLFAWHLDTPVVRSAGGRLCFLMLGSLAAGSGSLYGFFGEPTRPACLLRQALFALGFTIFLSCLTVRSFQLIIIFKFSTKVPTFYHAWVQNHGAGLFVMISSAAQLLICLTWLVVWTPLPAREYQRFPHLVMLECTETNSLGFILAFLYNGLLSISAFACSYLGKDLPENYNEAKCVTFSLLFNFVSWIAFFTTASVYDGKYLPAANMMAGLSSLSSGFGGYFLPKCYVILCRPDLNSTEHFQASIQDYTRRCGST</sequence>
<name>TS1R1_HUMAN</name>
<comment type="function">
    <text evidence="3">Putative taste receptor. TAS1R1/TAS1R3 responds to the umami taste stimulus (the taste of monosodium glutamate). Sequence differences within and between species can significantly influence the selectivity and specificity of taste responses.</text>
</comment>
<comment type="subunit">
    <text>Forms heterodimers with TAS1R3.</text>
</comment>
<comment type="subcellular location">
    <subcellularLocation>
        <location>Cell membrane</location>
        <topology>Multi-pass membrane protein</topology>
    </subcellularLocation>
</comment>
<comment type="alternative products">
    <event type="alternative splicing"/>
    <isoform>
        <id>Q7RTX1-1</id>
        <name>1</name>
        <name>Gm148 form B</name>
        <sequence type="displayed"/>
    </isoform>
    <isoform>
        <id>Q7RTX1-2</id>
        <name>2</name>
        <name>Gm148 form C</name>
        <sequence type="described" ref="VSP_012418"/>
    </isoform>
    <isoform>
        <id>Q7RTX1-3</id>
        <name>3</name>
        <name>Gm148 form A</name>
        <sequence type="described" ref="VSP_012418 VSP_012420"/>
    </isoform>
    <isoform>
        <id>Q7RTX1-4</id>
        <name>4</name>
        <name>Gm148 form D</name>
        <sequence type="described" ref="VSP_012418 VSP_012421 VSP_012422"/>
    </isoform>
</comment>
<comment type="miscellaneous">
    <molecule>Isoform 4</molecule>
    <text evidence="6">Incomplete sequence.</text>
</comment>
<comment type="similarity">
    <text evidence="6">Belongs to the G-protein coupled receptor 3 family. TAS1R subfamily.</text>
</comment>
<comment type="sequence caution" evidence="6">
    <conflict type="erroneous initiation">
        <sequence resource="EMBL-CDS" id="AAL91359"/>
    </conflict>
</comment>
<comment type="sequence caution" evidence="6">
    <conflict type="erroneous initiation">
        <sequence resource="EMBL-CDS" id="AAL91360"/>
    </conflict>
</comment>
<comment type="sequence caution" evidence="6">
    <conflict type="erroneous initiation">
        <sequence resource="EMBL-CDS" id="AAL91361"/>
    </conflict>
</comment>
<comment type="sequence caution" evidence="6">
    <conflict type="erroneous gene model prediction">
        <sequence resource="EMBL-CDS" id="BAC05845"/>
    </conflict>
</comment>
<comment type="sequence caution" evidence="6">
    <molecule>Isoform 3</molecule>
    <conflict type="frameshift">
        <sequence resource="EMBL-CDS" id="AAL91358"/>
    </conflict>
</comment>
<comment type="online information" name="Protein Spotlight">
    <link uri="https://www.proteinspotlight.org/back_issues/055"/>
    <text>The taste experience - Issue 55 of February 2005</text>
</comment>